<organism>
    <name type="scientific">Cytophaga hutchinsonii (strain ATCC 33406 / DSM 1761 / CIP 103989 / NBRC 15051 / NCIMB 9469 / D465)</name>
    <dbReference type="NCBI Taxonomy" id="269798"/>
    <lineage>
        <taxon>Bacteria</taxon>
        <taxon>Pseudomonadati</taxon>
        <taxon>Bacteroidota</taxon>
        <taxon>Cytophagia</taxon>
        <taxon>Cytophagales</taxon>
        <taxon>Cytophagaceae</taxon>
        <taxon>Cytophaga</taxon>
    </lineage>
</organism>
<name>COAX_CYTH3</name>
<reference key="1">
    <citation type="journal article" date="2007" name="Appl. Environ. Microbiol.">
        <title>Genome sequence of the cellulolytic gliding bacterium Cytophaga hutchinsonii.</title>
        <authorList>
            <person name="Xie G."/>
            <person name="Bruce D.C."/>
            <person name="Challacombe J.F."/>
            <person name="Chertkov O."/>
            <person name="Detter J.C."/>
            <person name="Gilna P."/>
            <person name="Han C.S."/>
            <person name="Lucas S."/>
            <person name="Misra M."/>
            <person name="Myers G.L."/>
            <person name="Richardson P."/>
            <person name="Tapia R."/>
            <person name="Thayer N."/>
            <person name="Thompson L.S."/>
            <person name="Brettin T.S."/>
            <person name="Henrissat B."/>
            <person name="Wilson D.B."/>
            <person name="McBride M.J."/>
        </authorList>
    </citation>
    <scope>NUCLEOTIDE SEQUENCE [LARGE SCALE GENOMIC DNA]</scope>
    <source>
        <strain>ATCC 33406 / DSM 1761 / JCM 20678 / CIP 103989 / IAM 12607 / NBRC 15051 / NCIMB 9469 / D465</strain>
    </source>
</reference>
<accession>Q11Q02</accession>
<keyword id="KW-0067">ATP-binding</keyword>
<keyword id="KW-0173">Coenzyme A biosynthesis</keyword>
<keyword id="KW-0963">Cytoplasm</keyword>
<keyword id="KW-0418">Kinase</keyword>
<keyword id="KW-0479">Metal-binding</keyword>
<keyword id="KW-0547">Nucleotide-binding</keyword>
<keyword id="KW-0630">Potassium</keyword>
<keyword id="KW-1185">Reference proteome</keyword>
<keyword id="KW-0808">Transferase</keyword>
<feature type="chain" id="PRO_0000267516" description="Type III pantothenate kinase">
    <location>
        <begin position="1"/>
        <end position="235"/>
    </location>
</feature>
<feature type="active site" description="Proton acceptor" evidence="1">
    <location>
        <position position="90"/>
    </location>
</feature>
<feature type="binding site" evidence="1">
    <location>
        <begin position="6"/>
        <end position="13"/>
    </location>
    <ligand>
        <name>ATP</name>
        <dbReference type="ChEBI" id="CHEBI:30616"/>
    </ligand>
</feature>
<feature type="binding site" evidence="1">
    <location>
        <position position="81"/>
    </location>
    <ligand>
        <name>substrate</name>
    </ligand>
</feature>
<feature type="binding site" evidence="1">
    <location>
        <begin position="88"/>
        <end position="91"/>
    </location>
    <ligand>
        <name>substrate</name>
    </ligand>
</feature>
<feature type="binding site" evidence="1">
    <location>
        <position position="111"/>
    </location>
    <ligand>
        <name>K(+)</name>
        <dbReference type="ChEBI" id="CHEBI:29103"/>
    </ligand>
</feature>
<feature type="binding site" evidence="1">
    <location>
        <position position="114"/>
    </location>
    <ligand>
        <name>ATP</name>
        <dbReference type="ChEBI" id="CHEBI:30616"/>
    </ligand>
</feature>
<feature type="binding site" evidence="1">
    <location>
        <position position="166"/>
    </location>
    <ligand>
        <name>substrate</name>
    </ligand>
</feature>
<comment type="function">
    <text evidence="1">Catalyzes the phosphorylation of pantothenate (Pan), the first step in CoA biosynthesis.</text>
</comment>
<comment type="catalytic activity">
    <reaction evidence="1">
        <text>(R)-pantothenate + ATP = (R)-4'-phosphopantothenate + ADP + H(+)</text>
        <dbReference type="Rhea" id="RHEA:16373"/>
        <dbReference type="ChEBI" id="CHEBI:10986"/>
        <dbReference type="ChEBI" id="CHEBI:15378"/>
        <dbReference type="ChEBI" id="CHEBI:29032"/>
        <dbReference type="ChEBI" id="CHEBI:30616"/>
        <dbReference type="ChEBI" id="CHEBI:456216"/>
        <dbReference type="EC" id="2.7.1.33"/>
    </reaction>
</comment>
<comment type="cofactor">
    <cofactor evidence="1">
        <name>NH4(+)</name>
        <dbReference type="ChEBI" id="CHEBI:28938"/>
    </cofactor>
    <cofactor evidence="1">
        <name>K(+)</name>
        <dbReference type="ChEBI" id="CHEBI:29103"/>
    </cofactor>
    <text evidence="1">A monovalent cation. Ammonium or potassium.</text>
</comment>
<comment type="pathway">
    <text evidence="1">Cofactor biosynthesis; coenzyme A biosynthesis; CoA from (R)-pantothenate: step 1/5.</text>
</comment>
<comment type="subunit">
    <text evidence="1">Homodimer.</text>
</comment>
<comment type="subcellular location">
    <subcellularLocation>
        <location evidence="1">Cytoplasm</location>
    </subcellularLocation>
</comment>
<comment type="similarity">
    <text evidence="1">Belongs to the type III pantothenate kinase family.</text>
</comment>
<gene>
    <name evidence="1" type="primary">coaX</name>
    <name type="ordered locus">CHU_3272</name>
</gene>
<sequence>MNIVIDVGNNYIKIGAFSGGKLQWTKTYSRLHDVLQAVQAEKPVHVFISSVRNQTDFSALETVTQVHFLNKHTRLPIDIDYETPHTLGTDRIAAAVGAATLFPGCNNLFFDLGTCLTHGFINTKAVFEGGSISPGVEMRFKALAHFTEKLPLVKAEKEPPLTGKSTSGSIMSGVLNGIQFEIEGFIEAYQNKYTPINVLLTGGNASLFEKRLKEPIFVIAELNLIGLNRILNYNV</sequence>
<protein>
    <recommendedName>
        <fullName evidence="1">Type III pantothenate kinase</fullName>
        <ecNumber evidence="1">2.7.1.33</ecNumber>
    </recommendedName>
    <alternativeName>
        <fullName evidence="1">PanK-III</fullName>
    </alternativeName>
    <alternativeName>
        <fullName evidence="1">Pantothenic acid kinase</fullName>
    </alternativeName>
</protein>
<proteinExistence type="inferred from homology"/>
<dbReference type="EC" id="2.7.1.33" evidence="1"/>
<dbReference type="EMBL" id="CP000383">
    <property type="protein sequence ID" value="ABG60511.1"/>
    <property type="molecule type" value="Genomic_DNA"/>
</dbReference>
<dbReference type="RefSeq" id="WP_011586621.1">
    <property type="nucleotide sequence ID" value="NC_008255.1"/>
</dbReference>
<dbReference type="SMR" id="Q11Q02"/>
<dbReference type="STRING" id="269798.CHU_3272"/>
<dbReference type="KEGG" id="chu:CHU_3272"/>
<dbReference type="eggNOG" id="COG1521">
    <property type="taxonomic scope" value="Bacteria"/>
</dbReference>
<dbReference type="HOGENOM" id="CLU_066627_2_0_10"/>
<dbReference type="OrthoDB" id="9804707at2"/>
<dbReference type="UniPathway" id="UPA00241">
    <property type="reaction ID" value="UER00352"/>
</dbReference>
<dbReference type="Proteomes" id="UP000001822">
    <property type="component" value="Chromosome"/>
</dbReference>
<dbReference type="GO" id="GO:0005737">
    <property type="term" value="C:cytoplasm"/>
    <property type="evidence" value="ECO:0007669"/>
    <property type="project" value="UniProtKB-SubCell"/>
</dbReference>
<dbReference type="GO" id="GO:0005524">
    <property type="term" value="F:ATP binding"/>
    <property type="evidence" value="ECO:0007669"/>
    <property type="project" value="UniProtKB-UniRule"/>
</dbReference>
<dbReference type="GO" id="GO:0046872">
    <property type="term" value="F:metal ion binding"/>
    <property type="evidence" value="ECO:0007669"/>
    <property type="project" value="UniProtKB-KW"/>
</dbReference>
<dbReference type="GO" id="GO:0004594">
    <property type="term" value="F:pantothenate kinase activity"/>
    <property type="evidence" value="ECO:0007669"/>
    <property type="project" value="UniProtKB-UniRule"/>
</dbReference>
<dbReference type="GO" id="GO:0015937">
    <property type="term" value="P:coenzyme A biosynthetic process"/>
    <property type="evidence" value="ECO:0007669"/>
    <property type="project" value="UniProtKB-UniRule"/>
</dbReference>
<dbReference type="CDD" id="cd24015">
    <property type="entry name" value="ASKHA_NBD_PanK-III"/>
    <property type="match status" value="1"/>
</dbReference>
<dbReference type="Gene3D" id="3.30.420.40">
    <property type="match status" value="1"/>
</dbReference>
<dbReference type="HAMAP" id="MF_01274">
    <property type="entry name" value="Pantothen_kinase_3"/>
    <property type="match status" value="1"/>
</dbReference>
<dbReference type="InterPro" id="IPR043129">
    <property type="entry name" value="ATPase_NBD"/>
</dbReference>
<dbReference type="InterPro" id="IPR004619">
    <property type="entry name" value="Type_III_PanK"/>
</dbReference>
<dbReference type="NCBIfam" id="TIGR00671">
    <property type="entry name" value="baf"/>
    <property type="match status" value="1"/>
</dbReference>
<dbReference type="NCBIfam" id="NF009850">
    <property type="entry name" value="PRK13320.1-2"/>
    <property type="match status" value="1"/>
</dbReference>
<dbReference type="PANTHER" id="PTHR34265">
    <property type="entry name" value="TYPE III PANTOTHENATE KINASE"/>
    <property type="match status" value="1"/>
</dbReference>
<dbReference type="PANTHER" id="PTHR34265:SF1">
    <property type="entry name" value="TYPE III PANTOTHENATE KINASE"/>
    <property type="match status" value="1"/>
</dbReference>
<dbReference type="Pfam" id="PF03309">
    <property type="entry name" value="Pan_kinase"/>
    <property type="match status" value="1"/>
</dbReference>
<dbReference type="SUPFAM" id="SSF53067">
    <property type="entry name" value="Actin-like ATPase domain"/>
    <property type="match status" value="2"/>
</dbReference>
<evidence type="ECO:0000255" key="1">
    <source>
        <dbReference type="HAMAP-Rule" id="MF_01274"/>
    </source>
</evidence>